<gene>
    <name evidence="1" type="primary">nudL</name>
    <name type="ordered locus">ECA2379</name>
</gene>
<accession>Q6D4L1</accession>
<dbReference type="EC" id="3.6.1.-" evidence="1"/>
<dbReference type="EMBL" id="BX950851">
    <property type="protein sequence ID" value="CAG75282.1"/>
    <property type="molecule type" value="Genomic_DNA"/>
</dbReference>
<dbReference type="SMR" id="Q6D4L1"/>
<dbReference type="STRING" id="218491.ECA2379"/>
<dbReference type="KEGG" id="eca:ECA2379"/>
<dbReference type="eggNOG" id="COG0494">
    <property type="taxonomic scope" value="Bacteria"/>
</dbReference>
<dbReference type="HOGENOM" id="CLU_040940_5_2_6"/>
<dbReference type="Proteomes" id="UP000007966">
    <property type="component" value="Chromosome"/>
</dbReference>
<dbReference type="GO" id="GO:0010945">
    <property type="term" value="F:coenzyme A diphosphatase activity"/>
    <property type="evidence" value="ECO:0007669"/>
    <property type="project" value="InterPro"/>
</dbReference>
<dbReference type="GO" id="GO:0000287">
    <property type="term" value="F:magnesium ion binding"/>
    <property type="evidence" value="ECO:0007669"/>
    <property type="project" value="UniProtKB-UniRule"/>
</dbReference>
<dbReference type="GO" id="GO:0030145">
    <property type="term" value="F:manganese ion binding"/>
    <property type="evidence" value="ECO:0007669"/>
    <property type="project" value="UniProtKB-UniRule"/>
</dbReference>
<dbReference type="GO" id="GO:0009132">
    <property type="term" value="P:nucleoside diphosphate metabolic process"/>
    <property type="evidence" value="ECO:0007669"/>
    <property type="project" value="InterPro"/>
</dbReference>
<dbReference type="CDD" id="cd03426">
    <property type="entry name" value="NUDIX_CoAse_Nudt7"/>
    <property type="match status" value="1"/>
</dbReference>
<dbReference type="Gene3D" id="3.90.79.10">
    <property type="entry name" value="Nucleoside Triphosphate Pyrophosphohydrolase"/>
    <property type="match status" value="1"/>
</dbReference>
<dbReference type="HAMAP" id="MF_01592">
    <property type="entry name" value="Nudix_NudL"/>
    <property type="match status" value="1"/>
</dbReference>
<dbReference type="InterPro" id="IPR045121">
    <property type="entry name" value="CoAse"/>
</dbReference>
<dbReference type="InterPro" id="IPR015797">
    <property type="entry name" value="NUDIX_hydrolase-like_dom_sf"/>
</dbReference>
<dbReference type="InterPro" id="IPR000086">
    <property type="entry name" value="NUDIX_hydrolase_dom"/>
</dbReference>
<dbReference type="InterPro" id="IPR000059">
    <property type="entry name" value="NUDIX_hydrolase_NudL_CS"/>
</dbReference>
<dbReference type="InterPro" id="IPR023735">
    <property type="entry name" value="Nudix_NudL"/>
</dbReference>
<dbReference type="NCBIfam" id="NF007980">
    <property type="entry name" value="PRK10707.1"/>
    <property type="match status" value="1"/>
</dbReference>
<dbReference type="PANTHER" id="PTHR12992:SF11">
    <property type="entry name" value="MITOCHONDRIAL COENZYME A DIPHOSPHATASE NUDT8"/>
    <property type="match status" value="1"/>
</dbReference>
<dbReference type="PANTHER" id="PTHR12992">
    <property type="entry name" value="NUDIX HYDROLASE"/>
    <property type="match status" value="1"/>
</dbReference>
<dbReference type="Pfam" id="PF00293">
    <property type="entry name" value="NUDIX"/>
    <property type="match status" value="1"/>
</dbReference>
<dbReference type="SUPFAM" id="SSF55811">
    <property type="entry name" value="Nudix"/>
    <property type="match status" value="1"/>
</dbReference>
<dbReference type="PROSITE" id="PS51462">
    <property type="entry name" value="NUDIX"/>
    <property type="match status" value="1"/>
</dbReference>
<dbReference type="PROSITE" id="PS01293">
    <property type="entry name" value="NUDIX_COA"/>
    <property type="match status" value="1"/>
</dbReference>
<organism>
    <name type="scientific">Pectobacterium atrosepticum (strain SCRI 1043 / ATCC BAA-672)</name>
    <name type="common">Erwinia carotovora subsp. atroseptica</name>
    <dbReference type="NCBI Taxonomy" id="218491"/>
    <lineage>
        <taxon>Bacteria</taxon>
        <taxon>Pseudomonadati</taxon>
        <taxon>Pseudomonadota</taxon>
        <taxon>Gammaproteobacteria</taxon>
        <taxon>Enterobacterales</taxon>
        <taxon>Pectobacteriaceae</taxon>
        <taxon>Pectobacterium</taxon>
    </lineage>
</organism>
<name>NUDL_PECAS</name>
<protein>
    <recommendedName>
        <fullName evidence="1">Uncharacterized Nudix hydrolase NudL</fullName>
        <ecNumber evidence="1">3.6.1.-</ecNumber>
    </recommendedName>
</protein>
<sequence>MPPTAFALNDFITRFQLQLPPSLRPVHQQRQAAVLVPIICHPTPTLLLTRRSADLRKHAGQVAFPGGAADKTDRSIIETALREAQEEVAIPPENVQVLGVLPPLDSVSGFQVTPVVGLIAAQTRFHPNEDEVAELFEMPLDEAFALTRYYPLDIERKQQRHRVYLSWYQQQFVWGLTAAIIHQLALQISDRP</sequence>
<reference key="1">
    <citation type="journal article" date="2004" name="Proc. Natl. Acad. Sci. U.S.A.">
        <title>Genome sequence of the enterobacterial phytopathogen Erwinia carotovora subsp. atroseptica and characterization of virulence factors.</title>
        <authorList>
            <person name="Bell K.S."/>
            <person name="Sebaihia M."/>
            <person name="Pritchard L."/>
            <person name="Holden M.T.G."/>
            <person name="Hyman L.J."/>
            <person name="Holeva M.C."/>
            <person name="Thomson N.R."/>
            <person name="Bentley S.D."/>
            <person name="Churcher L.J.C."/>
            <person name="Mungall K."/>
            <person name="Atkin R."/>
            <person name="Bason N."/>
            <person name="Brooks K."/>
            <person name="Chillingworth T."/>
            <person name="Clark K."/>
            <person name="Doggett J."/>
            <person name="Fraser A."/>
            <person name="Hance Z."/>
            <person name="Hauser H."/>
            <person name="Jagels K."/>
            <person name="Moule S."/>
            <person name="Norbertczak H."/>
            <person name="Ormond D."/>
            <person name="Price C."/>
            <person name="Quail M.A."/>
            <person name="Sanders M."/>
            <person name="Walker D."/>
            <person name="Whitehead S."/>
            <person name="Salmond G.P.C."/>
            <person name="Birch P.R.J."/>
            <person name="Parkhill J."/>
            <person name="Toth I.K."/>
        </authorList>
    </citation>
    <scope>NUCLEOTIDE SEQUENCE [LARGE SCALE GENOMIC DNA]</scope>
    <source>
        <strain>SCRI 1043 / ATCC BAA-672</strain>
    </source>
</reference>
<proteinExistence type="inferred from homology"/>
<evidence type="ECO:0000255" key="1">
    <source>
        <dbReference type="HAMAP-Rule" id="MF_01592"/>
    </source>
</evidence>
<comment type="function">
    <text evidence="1">Probably mediates the hydrolysis of some nucleoside diphosphate derivatives.</text>
</comment>
<comment type="cofactor">
    <cofactor evidence="1">
        <name>Mn(2+)</name>
        <dbReference type="ChEBI" id="CHEBI:29035"/>
    </cofactor>
    <cofactor evidence="1">
        <name>Mg(2+)</name>
        <dbReference type="ChEBI" id="CHEBI:18420"/>
    </cofactor>
</comment>
<comment type="similarity">
    <text evidence="1">Belongs to the Nudix hydrolase family. PCD1 subfamily.</text>
</comment>
<keyword id="KW-0378">Hydrolase</keyword>
<keyword id="KW-0460">Magnesium</keyword>
<keyword id="KW-0464">Manganese</keyword>
<keyword id="KW-0479">Metal-binding</keyword>
<keyword id="KW-1185">Reference proteome</keyword>
<feature type="chain" id="PRO_0000315571" description="Uncharacterized Nudix hydrolase NudL">
    <location>
        <begin position="1"/>
        <end position="192"/>
    </location>
</feature>
<feature type="domain" description="Nudix hydrolase" evidence="1">
    <location>
        <begin position="29"/>
        <end position="160"/>
    </location>
</feature>
<feature type="short sequence motif" description="Nudix box">
    <location>
        <begin position="67"/>
        <end position="89"/>
    </location>
</feature>
<feature type="binding site" evidence="1">
    <location>
        <position position="83"/>
    </location>
    <ligand>
        <name>Mg(2+)</name>
        <dbReference type="ChEBI" id="CHEBI:18420"/>
    </ligand>
</feature>
<feature type="binding site" evidence="1">
    <location>
        <position position="87"/>
    </location>
    <ligand>
        <name>Mg(2+)</name>
        <dbReference type="ChEBI" id="CHEBI:18420"/>
    </ligand>
</feature>